<evidence type="ECO:0000255" key="1">
    <source>
        <dbReference type="HAMAP-Rule" id="MF_00651"/>
    </source>
</evidence>
<accession>B4R966</accession>
<sequence length="156" mass="17092">MAVVDLIDLPAIAPPNTPLVGLDLGEKTIGVAVSDATRMVASPLGLIRKTKFTDDAKALFKLMESRRASGIVIGLPVNMDGTEGTRCQSNRAFARNLLRLREDLPIAFWDERMSTMAVNRMLVGEADMTRARRADVVDKMAAAWILQGALDRLRNL</sequence>
<feature type="chain" id="PRO_1000131054" description="Putative pre-16S rRNA nuclease">
    <location>
        <begin position="1"/>
        <end position="156"/>
    </location>
</feature>
<dbReference type="EC" id="3.1.-.-" evidence="1"/>
<dbReference type="EMBL" id="CP000747">
    <property type="protein sequence ID" value="ACG77736.1"/>
    <property type="molecule type" value="Genomic_DNA"/>
</dbReference>
<dbReference type="RefSeq" id="WP_012521880.1">
    <property type="nucleotide sequence ID" value="NC_011144.1"/>
</dbReference>
<dbReference type="SMR" id="B4R966"/>
<dbReference type="STRING" id="450851.PHZ_c1322"/>
<dbReference type="KEGG" id="pzu:PHZ_c1322"/>
<dbReference type="eggNOG" id="COG0816">
    <property type="taxonomic scope" value="Bacteria"/>
</dbReference>
<dbReference type="HOGENOM" id="CLU_098240_1_1_5"/>
<dbReference type="OrthoDB" id="9796140at2"/>
<dbReference type="Proteomes" id="UP000001868">
    <property type="component" value="Chromosome"/>
</dbReference>
<dbReference type="GO" id="GO:0005829">
    <property type="term" value="C:cytosol"/>
    <property type="evidence" value="ECO:0007669"/>
    <property type="project" value="TreeGrafter"/>
</dbReference>
<dbReference type="GO" id="GO:0004518">
    <property type="term" value="F:nuclease activity"/>
    <property type="evidence" value="ECO:0007669"/>
    <property type="project" value="UniProtKB-KW"/>
</dbReference>
<dbReference type="GO" id="GO:0000967">
    <property type="term" value="P:rRNA 5'-end processing"/>
    <property type="evidence" value="ECO:0007669"/>
    <property type="project" value="UniProtKB-UniRule"/>
</dbReference>
<dbReference type="CDD" id="cd16964">
    <property type="entry name" value="YqgF"/>
    <property type="match status" value="1"/>
</dbReference>
<dbReference type="Gene3D" id="3.30.420.140">
    <property type="entry name" value="YqgF/RNase H-like domain"/>
    <property type="match status" value="1"/>
</dbReference>
<dbReference type="HAMAP" id="MF_00651">
    <property type="entry name" value="Nuclease_YqgF"/>
    <property type="match status" value="1"/>
</dbReference>
<dbReference type="InterPro" id="IPR012337">
    <property type="entry name" value="RNaseH-like_sf"/>
</dbReference>
<dbReference type="InterPro" id="IPR005227">
    <property type="entry name" value="YqgF"/>
</dbReference>
<dbReference type="InterPro" id="IPR006641">
    <property type="entry name" value="YqgF/RNaseH-like_dom"/>
</dbReference>
<dbReference type="InterPro" id="IPR037027">
    <property type="entry name" value="YqgF/RNaseH-like_dom_sf"/>
</dbReference>
<dbReference type="NCBIfam" id="TIGR00250">
    <property type="entry name" value="RNAse_H_YqgF"/>
    <property type="match status" value="1"/>
</dbReference>
<dbReference type="PANTHER" id="PTHR33317">
    <property type="entry name" value="POLYNUCLEOTIDYL TRANSFERASE, RIBONUCLEASE H-LIKE SUPERFAMILY PROTEIN"/>
    <property type="match status" value="1"/>
</dbReference>
<dbReference type="PANTHER" id="PTHR33317:SF4">
    <property type="entry name" value="POLYNUCLEOTIDYL TRANSFERASE, RIBONUCLEASE H-LIKE SUPERFAMILY PROTEIN"/>
    <property type="match status" value="1"/>
</dbReference>
<dbReference type="Pfam" id="PF03652">
    <property type="entry name" value="RuvX"/>
    <property type="match status" value="1"/>
</dbReference>
<dbReference type="SMART" id="SM00732">
    <property type="entry name" value="YqgFc"/>
    <property type="match status" value="1"/>
</dbReference>
<dbReference type="SUPFAM" id="SSF53098">
    <property type="entry name" value="Ribonuclease H-like"/>
    <property type="match status" value="1"/>
</dbReference>
<name>YQGF_PHEZH</name>
<gene>
    <name type="ordered locus">PHZ_c1322</name>
</gene>
<reference key="1">
    <citation type="journal article" date="2008" name="BMC Genomics">
        <title>Complete genome of Phenylobacterium zucineum - a novel facultative intracellular bacterium isolated from human erythroleukemia cell line K562.</title>
        <authorList>
            <person name="Luo Y."/>
            <person name="Xu X."/>
            <person name="Ding Z."/>
            <person name="Liu Z."/>
            <person name="Zhang B."/>
            <person name="Yan Z."/>
            <person name="Sun J."/>
            <person name="Hu S."/>
            <person name="Hu X."/>
        </authorList>
    </citation>
    <scope>NUCLEOTIDE SEQUENCE [LARGE SCALE GENOMIC DNA]</scope>
    <source>
        <strain>HLK1</strain>
    </source>
</reference>
<keyword id="KW-0963">Cytoplasm</keyword>
<keyword id="KW-0378">Hydrolase</keyword>
<keyword id="KW-0540">Nuclease</keyword>
<keyword id="KW-1185">Reference proteome</keyword>
<keyword id="KW-0690">Ribosome biogenesis</keyword>
<organism>
    <name type="scientific">Phenylobacterium zucineum (strain HLK1)</name>
    <dbReference type="NCBI Taxonomy" id="450851"/>
    <lineage>
        <taxon>Bacteria</taxon>
        <taxon>Pseudomonadati</taxon>
        <taxon>Pseudomonadota</taxon>
        <taxon>Alphaproteobacteria</taxon>
        <taxon>Caulobacterales</taxon>
        <taxon>Caulobacteraceae</taxon>
        <taxon>Phenylobacterium</taxon>
    </lineage>
</organism>
<proteinExistence type="inferred from homology"/>
<protein>
    <recommendedName>
        <fullName evidence="1">Putative pre-16S rRNA nuclease</fullName>
        <ecNumber evidence="1">3.1.-.-</ecNumber>
    </recommendedName>
</protein>
<comment type="function">
    <text evidence="1">Could be a nuclease involved in processing of the 5'-end of pre-16S rRNA.</text>
</comment>
<comment type="subcellular location">
    <subcellularLocation>
        <location evidence="1">Cytoplasm</location>
    </subcellularLocation>
</comment>
<comment type="similarity">
    <text evidence="1">Belongs to the YqgF nuclease family.</text>
</comment>